<feature type="chain" id="PRO_0000118499" description="NADH-ubiquinone oxidoreductase chain 4L">
    <location>
        <begin position="1"/>
        <end position="89"/>
    </location>
</feature>
<feature type="transmembrane region" description="Helical" evidence="2">
    <location>
        <begin position="1"/>
        <end position="21"/>
    </location>
</feature>
<feature type="transmembrane region" description="Helical" evidence="2">
    <location>
        <begin position="22"/>
        <end position="42"/>
    </location>
</feature>
<feature type="transmembrane region" description="Helical" evidence="2">
    <location>
        <begin position="55"/>
        <end position="75"/>
    </location>
</feature>
<comment type="function">
    <text evidence="1">Core subunit of the mitochondrial membrane respiratory chain NADH dehydrogenase (Complex I) that is believed to belong to the minimal assembly required for catalysis. Complex I functions in the transfer of electrons from NADH to the respiratory chain. The immediate electron acceptor for the enzyme is believed to be ubiquinone (By similarity).</text>
</comment>
<comment type="catalytic activity">
    <reaction>
        <text>a ubiquinone + NADH + 5 H(+)(in) = a ubiquinol + NAD(+) + 4 H(+)(out)</text>
        <dbReference type="Rhea" id="RHEA:29091"/>
        <dbReference type="Rhea" id="RHEA-COMP:9565"/>
        <dbReference type="Rhea" id="RHEA-COMP:9566"/>
        <dbReference type="ChEBI" id="CHEBI:15378"/>
        <dbReference type="ChEBI" id="CHEBI:16389"/>
        <dbReference type="ChEBI" id="CHEBI:17976"/>
        <dbReference type="ChEBI" id="CHEBI:57540"/>
        <dbReference type="ChEBI" id="CHEBI:57945"/>
        <dbReference type="EC" id="7.1.1.2"/>
    </reaction>
</comment>
<comment type="subcellular location">
    <subcellularLocation>
        <location evidence="1">Mitochondrion membrane</location>
        <topology evidence="1">Multi-pass membrane protein</topology>
    </subcellularLocation>
</comment>
<comment type="similarity">
    <text evidence="3">Belongs to the complex I subunit 4L family.</text>
</comment>
<name>NU4LM_TRIRU</name>
<organism>
    <name type="scientific">Trichophyton rubrum</name>
    <name type="common">Athlete's foot fungus</name>
    <name type="synonym">Epidermophyton rubrum</name>
    <dbReference type="NCBI Taxonomy" id="5551"/>
    <lineage>
        <taxon>Eukaryota</taxon>
        <taxon>Fungi</taxon>
        <taxon>Dikarya</taxon>
        <taxon>Ascomycota</taxon>
        <taxon>Pezizomycotina</taxon>
        <taxon>Eurotiomycetes</taxon>
        <taxon>Eurotiomycetidae</taxon>
        <taxon>Onygenales</taxon>
        <taxon>Arthrodermataceae</taxon>
        <taxon>Trichophyton</taxon>
    </lineage>
</organism>
<reference key="1">
    <citation type="journal article" date="1992" name="Curr. Genet.">
        <title>Mitochondrial DNA sequence analysis of the cytochrome oxidase subunit I and II genes, the ATPase9 gene, the NADH dehydrogenase ND4L and ND5 gene complex, and the glutaminyl, methionyl and arginyl tRNA genes from Trichophyton rubrum.</title>
        <authorList>
            <person name="de Bievre C."/>
            <person name="Dujon B."/>
        </authorList>
    </citation>
    <scope>NUCLEOTIDE SEQUENCE [GENOMIC DNA]</scope>
    <source>
        <strain>IP 1817.89</strain>
    </source>
</reference>
<accession>Q01562</accession>
<protein>
    <recommendedName>
        <fullName>NADH-ubiquinone oxidoreductase chain 4L</fullName>
        <ecNumber>7.1.1.2</ecNumber>
    </recommendedName>
    <alternativeName>
        <fullName>NADH dehydrogenase subunit 4L</fullName>
    </alternativeName>
</protein>
<evidence type="ECO:0000250" key="1"/>
<evidence type="ECO:0000255" key="2"/>
<evidence type="ECO:0000305" key="3"/>
<keyword id="KW-0249">Electron transport</keyword>
<keyword id="KW-0472">Membrane</keyword>
<keyword id="KW-0496">Mitochondrion</keyword>
<keyword id="KW-0520">NAD</keyword>
<keyword id="KW-0679">Respiratory chain</keyword>
<keyword id="KW-1278">Translocase</keyword>
<keyword id="KW-0812">Transmembrane</keyword>
<keyword id="KW-1133">Transmembrane helix</keyword>
<keyword id="KW-0813">Transport</keyword>
<keyword id="KW-0830">Ubiquinone</keyword>
<proteinExistence type="inferred from homology"/>
<sequence>MNLSLILFLIGILGFVLNRKNIILMLISIEIILLSVTFLILISSLNFDDILGQTFAIYIITIAGAESAIGLGILVAFYRLRGSIAIEYK</sequence>
<dbReference type="EC" id="7.1.1.2"/>
<dbReference type="EMBL" id="X65223">
    <property type="protein sequence ID" value="CAA46328.1"/>
    <property type="molecule type" value="Genomic_DNA"/>
</dbReference>
<dbReference type="PIR" id="S26944">
    <property type="entry name" value="S26944"/>
</dbReference>
<dbReference type="SMR" id="Q01562"/>
<dbReference type="GO" id="GO:0031966">
    <property type="term" value="C:mitochondrial membrane"/>
    <property type="evidence" value="ECO:0007669"/>
    <property type="project" value="UniProtKB-SubCell"/>
</dbReference>
<dbReference type="GO" id="GO:0030964">
    <property type="term" value="C:NADH dehydrogenase complex"/>
    <property type="evidence" value="ECO:0007669"/>
    <property type="project" value="TreeGrafter"/>
</dbReference>
<dbReference type="GO" id="GO:0008137">
    <property type="term" value="F:NADH dehydrogenase (ubiquinone) activity"/>
    <property type="evidence" value="ECO:0007669"/>
    <property type="project" value="UniProtKB-EC"/>
</dbReference>
<dbReference type="GO" id="GO:0042773">
    <property type="term" value="P:ATP synthesis coupled electron transport"/>
    <property type="evidence" value="ECO:0007669"/>
    <property type="project" value="InterPro"/>
</dbReference>
<dbReference type="FunFam" id="1.10.287.3510:FF:000004">
    <property type="entry name" value="NADH-ubiquinone oxidoreductase chain 4L"/>
    <property type="match status" value="1"/>
</dbReference>
<dbReference type="Gene3D" id="1.10.287.3510">
    <property type="match status" value="1"/>
</dbReference>
<dbReference type="InterPro" id="IPR001133">
    <property type="entry name" value="NADH_UbQ_OxRdtase_chain4L/K"/>
</dbReference>
<dbReference type="InterPro" id="IPR039428">
    <property type="entry name" value="NUOK/Mnh_C1-like"/>
</dbReference>
<dbReference type="NCBIfam" id="NF004320">
    <property type="entry name" value="PRK05715.1-2"/>
    <property type="match status" value="1"/>
</dbReference>
<dbReference type="PANTHER" id="PTHR11434:SF16">
    <property type="entry name" value="NADH-UBIQUINONE OXIDOREDUCTASE CHAIN 4L"/>
    <property type="match status" value="1"/>
</dbReference>
<dbReference type="PANTHER" id="PTHR11434">
    <property type="entry name" value="NADH-UBIQUINONE OXIDOREDUCTASE SUBUNIT ND4L"/>
    <property type="match status" value="1"/>
</dbReference>
<dbReference type="Pfam" id="PF00420">
    <property type="entry name" value="Oxidored_q2"/>
    <property type="match status" value="1"/>
</dbReference>
<geneLocation type="mitochondrion"/>
<gene>
    <name type="primary">ND4L</name>
    <name type="synonym">NADH4L</name>
</gene>